<organism>
    <name type="scientific">Haemophilus influenzae (strain ATCC 51907 / DSM 11121 / KW20 / Rd)</name>
    <dbReference type="NCBI Taxonomy" id="71421"/>
    <lineage>
        <taxon>Bacteria</taxon>
        <taxon>Pseudomonadati</taxon>
        <taxon>Pseudomonadota</taxon>
        <taxon>Gammaproteobacteria</taxon>
        <taxon>Pasteurellales</taxon>
        <taxon>Pasteurellaceae</taxon>
        <taxon>Haemophilus</taxon>
    </lineage>
</organism>
<accession>P44224</accession>
<name>VG28_HAEIN</name>
<keyword id="KW-1185">Reference proteome</keyword>
<comment type="similarity">
    <text evidence="1">To phage Mu protein gp28.</text>
</comment>
<evidence type="ECO:0000305" key="1"/>
<feature type="chain" id="PRO_0000077823" description="Mu-like prophage FluMu protein gp28">
    <location>
        <begin position="1"/>
        <end position="508"/>
    </location>
</feature>
<gene>
    <name type="ordered locus">HI_1500</name>
</gene>
<sequence>MQTLPDLIPFDPNALLLGYQKRWVADTSQLKIAEKSRRTGLTWAEAADDVMIASLAKSEGGSDVFYIGSNKEMAREFIDACAMWAAQFNRAAGQIQEELFNDEDKDILTYVIYFASGFKIKALSSNPKNLRGMQGVVCIDEAAFHEKLAEVLKAALALTMWGAKVRLISTHNGVDNLFNQLIQDSRAGRKSYSVHTITLDDACAEGLYQRICQVSKQLWTPEKEAAWKAGLLRETATEDDALEEYYCVPKASSGAYIPRPMIERAATEGKAKLRFECDAKFMEWTEDERTVITSEFCLTQLLPHLQALNPDRRHAFGVDFARSADLSVYAVCAVQPDTARHFDLTLEIKNCPYNQQKQIMLFMLANLPRLIGAAFDATGNGGYLAEAALIRYGSSMVEAVQLNEKWYREWMPKYKALYESGYIQIPKDEEIILDHGHIQVINGVPKIDKSRSKDKSGKRHGDSAVAYCMAVRASYMTGGEIDFIPLPDKHSDRSENDEFDDFISNWDW</sequence>
<protein>
    <recommendedName>
        <fullName>Mu-like prophage FluMu protein gp28</fullName>
    </recommendedName>
</protein>
<dbReference type="EMBL" id="L42023">
    <property type="protein sequence ID" value="AAC23150.1"/>
    <property type="molecule type" value="Genomic_DNA"/>
</dbReference>
<dbReference type="PIR" id="I64032">
    <property type="entry name" value="I64032"/>
</dbReference>
<dbReference type="RefSeq" id="NP_439650.1">
    <property type="nucleotide sequence ID" value="NC_000907.1"/>
</dbReference>
<dbReference type="STRING" id="71421.HI_1500"/>
<dbReference type="EnsemblBacteria" id="AAC23150">
    <property type="protein sequence ID" value="AAC23150"/>
    <property type="gene ID" value="HI_1500"/>
</dbReference>
<dbReference type="KEGG" id="hin:HI_1500"/>
<dbReference type="PATRIC" id="fig|71421.8.peg.1570"/>
<dbReference type="eggNOG" id="COG4373">
    <property type="taxonomic scope" value="Bacteria"/>
</dbReference>
<dbReference type="HOGENOM" id="CLU_030701_0_0_6"/>
<dbReference type="OrthoDB" id="5827905at2"/>
<dbReference type="PhylomeDB" id="P44224"/>
<dbReference type="BioCyc" id="HINF71421:G1GJ1-1523-MONOMER"/>
<dbReference type="Proteomes" id="UP000000579">
    <property type="component" value="Chromosome"/>
</dbReference>
<dbReference type="Gene3D" id="3.30.420.240">
    <property type="match status" value="1"/>
</dbReference>
<dbReference type="Gene3D" id="3.40.50.300">
    <property type="entry name" value="P-loop containing nucleotide triphosphate hydrolases"/>
    <property type="match status" value="1"/>
</dbReference>
<dbReference type="InterPro" id="IPR027417">
    <property type="entry name" value="P-loop_NTPase"/>
</dbReference>
<dbReference type="InterPro" id="IPR012036">
    <property type="entry name" value="Phage_Mu_Gp28"/>
</dbReference>
<dbReference type="Pfam" id="PF03237">
    <property type="entry name" value="Terminase_6N"/>
    <property type="match status" value="1"/>
</dbReference>
<dbReference type="PIRSF" id="PIRSF007056">
    <property type="entry name" value="UCP007056"/>
    <property type="match status" value="1"/>
</dbReference>
<proteinExistence type="predicted"/>
<reference key="1">
    <citation type="journal article" date="1995" name="Science">
        <title>Whole-genome random sequencing and assembly of Haemophilus influenzae Rd.</title>
        <authorList>
            <person name="Fleischmann R.D."/>
            <person name="Adams M.D."/>
            <person name="White O."/>
            <person name="Clayton R.A."/>
            <person name="Kirkness E.F."/>
            <person name="Kerlavage A.R."/>
            <person name="Bult C.J."/>
            <person name="Tomb J.-F."/>
            <person name="Dougherty B.A."/>
            <person name="Merrick J.M."/>
            <person name="McKenney K."/>
            <person name="Sutton G.G."/>
            <person name="FitzHugh W."/>
            <person name="Fields C.A."/>
            <person name="Gocayne J.D."/>
            <person name="Scott J.D."/>
            <person name="Shirley R."/>
            <person name="Liu L.-I."/>
            <person name="Glodek A."/>
            <person name="Kelley J.M."/>
            <person name="Weidman J.F."/>
            <person name="Phillips C.A."/>
            <person name="Spriggs T."/>
            <person name="Hedblom E."/>
            <person name="Cotton M.D."/>
            <person name="Utterback T.R."/>
            <person name="Hanna M.C."/>
            <person name="Nguyen D.T."/>
            <person name="Saudek D.M."/>
            <person name="Brandon R.C."/>
            <person name="Fine L.D."/>
            <person name="Fritchman J.L."/>
            <person name="Fuhrmann J.L."/>
            <person name="Geoghagen N.S.M."/>
            <person name="Gnehm C.L."/>
            <person name="McDonald L.A."/>
            <person name="Small K.V."/>
            <person name="Fraser C.M."/>
            <person name="Smith H.O."/>
            <person name="Venter J.C."/>
        </authorList>
    </citation>
    <scope>NUCLEOTIDE SEQUENCE [LARGE SCALE GENOMIC DNA]</scope>
    <source>
        <strain>ATCC 51907 / DSM 11121 / KW20 / Rd</strain>
    </source>
</reference>